<name>DDL_NEIMF</name>
<accession>A1KVL1</accession>
<dbReference type="EC" id="6.3.2.4" evidence="2"/>
<dbReference type="EMBL" id="AM421808">
    <property type="protein sequence ID" value="CAM10915.1"/>
    <property type="molecule type" value="Genomic_DNA"/>
</dbReference>
<dbReference type="RefSeq" id="WP_002220377.1">
    <property type="nucleotide sequence ID" value="NC_008767.1"/>
</dbReference>
<dbReference type="SMR" id="A1KVL1"/>
<dbReference type="KEGG" id="nmc:NMC1740"/>
<dbReference type="HOGENOM" id="CLU_039268_1_2_4"/>
<dbReference type="UniPathway" id="UPA00219"/>
<dbReference type="Proteomes" id="UP000002286">
    <property type="component" value="Chromosome"/>
</dbReference>
<dbReference type="GO" id="GO:0005737">
    <property type="term" value="C:cytoplasm"/>
    <property type="evidence" value="ECO:0007669"/>
    <property type="project" value="UniProtKB-SubCell"/>
</dbReference>
<dbReference type="GO" id="GO:0005524">
    <property type="term" value="F:ATP binding"/>
    <property type="evidence" value="ECO:0007669"/>
    <property type="project" value="UniProtKB-KW"/>
</dbReference>
<dbReference type="GO" id="GO:0008716">
    <property type="term" value="F:D-alanine-D-alanine ligase activity"/>
    <property type="evidence" value="ECO:0007669"/>
    <property type="project" value="UniProtKB-UniRule"/>
</dbReference>
<dbReference type="GO" id="GO:0046872">
    <property type="term" value="F:metal ion binding"/>
    <property type="evidence" value="ECO:0007669"/>
    <property type="project" value="UniProtKB-KW"/>
</dbReference>
<dbReference type="GO" id="GO:0071555">
    <property type="term" value="P:cell wall organization"/>
    <property type="evidence" value="ECO:0007669"/>
    <property type="project" value="UniProtKB-KW"/>
</dbReference>
<dbReference type="GO" id="GO:0009252">
    <property type="term" value="P:peptidoglycan biosynthetic process"/>
    <property type="evidence" value="ECO:0007669"/>
    <property type="project" value="UniProtKB-UniRule"/>
</dbReference>
<dbReference type="GO" id="GO:0008360">
    <property type="term" value="P:regulation of cell shape"/>
    <property type="evidence" value="ECO:0007669"/>
    <property type="project" value="UniProtKB-KW"/>
</dbReference>
<dbReference type="FunFam" id="3.30.1490.20:FF:000023">
    <property type="entry name" value="D-alanine--D-alanine ligase"/>
    <property type="match status" value="1"/>
</dbReference>
<dbReference type="FunFam" id="3.30.470.20:FF:000008">
    <property type="entry name" value="D-alanine--D-alanine ligase"/>
    <property type="match status" value="1"/>
</dbReference>
<dbReference type="FunFam" id="3.40.50.20:FF:000013">
    <property type="entry name" value="D-alanine--D-alanine ligase"/>
    <property type="match status" value="1"/>
</dbReference>
<dbReference type="Gene3D" id="3.40.50.20">
    <property type="match status" value="1"/>
</dbReference>
<dbReference type="Gene3D" id="3.30.1490.20">
    <property type="entry name" value="ATP-grasp fold, A domain"/>
    <property type="match status" value="1"/>
</dbReference>
<dbReference type="Gene3D" id="3.30.470.20">
    <property type="entry name" value="ATP-grasp fold, B domain"/>
    <property type="match status" value="1"/>
</dbReference>
<dbReference type="HAMAP" id="MF_00047">
    <property type="entry name" value="Dala_Dala_lig"/>
    <property type="match status" value="1"/>
</dbReference>
<dbReference type="InterPro" id="IPR011761">
    <property type="entry name" value="ATP-grasp"/>
</dbReference>
<dbReference type="InterPro" id="IPR013815">
    <property type="entry name" value="ATP_grasp_subdomain_1"/>
</dbReference>
<dbReference type="InterPro" id="IPR000291">
    <property type="entry name" value="D-Ala_lig_Van_CS"/>
</dbReference>
<dbReference type="InterPro" id="IPR005905">
    <property type="entry name" value="D_ala_D_ala"/>
</dbReference>
<dbReference type="InterPro" id="IPR011095">
    <property type="entry name" value="Dala_Dala_lig_C"/>
</dbReference>
<dbReference type="InterPro" id="IPR011127">
    <property type="entry name" value="Dala_Dala_lig_N"/>
</dbReference>
<dbReference type="InterPro" id="IPR016185">
    <property type="entry name" value="PreATP-grasp_dom_sf"/>
</dbReference>
<dbReference type="NCBIfam" id="TIGR01205">
    <property type="entry name" value="D_ala_D_alaTIGR"/>
    <property type="match status" value="1"/>
</dbReference>
<dbReference type="NCBIfam" id="NF002378">
    <property type="entry name" value="PRK01372.1"/>
    <property type="match status" value="1"/>
</dbReference>
<dbReference type="PANTHER" id="PTHR23132">
    <property type="entry name" value="D-ALANINE--D-ALANINE LIGASE"/>
    <property type="match status" value="1"/>
</dbReference>
<dbReference type="PANTHER" id="PTHR23132:SF23">
    <property type="entry name" value="D-ALANINE--D-ALANINE LIGASE B"/>
    <property type="match status" value="1"/>
</dbReference>
<dbReference type="Pfam" id="PF07478">
    <property type="entry name" value="Dala_Dala_lig_C"/>
    <property type="match status" value="1"/>
</dbReference>
<dbReference type="Pfam" id="PF01820">
    <property type="entry name" value="Dala_Dala_lig_N"/>
    <property type="match status" value="1"/>
</dbReference>
<dbReference type="PIRSF" id="PIRSF039102">
    <property type="entry name" value="Ddl/VanB"/>
    <property type="match status" value="1"/>
</dbReference>
<dbReference type="SUPFAM" id="SSF56059">
    <property type="entry name" value="Glutathione synthetase ATP-binding domain-like"/>
    <property type="match status" value="1"/>
</dbReference>
<dbReference type="SUPFAM" id="SSF52440">
    <property type="entry name" value="PreATP-grasp domain"/>
    <property type="match status" value="1"/>
</dbReference>
<dbReference type="PROSITE" id="PS50975">
    <property type="entry name" value="ATP_GRASP"/>
    <property type="match status" value="1"/>
</dbReference>
<dbReference type="PROSITE" id="PS00843">
    <property type="entry name" value="DALA_DALA_LIGASE_1"/>
    <property type="match status" value="1"/>
</dbReference>
<dbReference type="PROSITE" id="PS00844">
    <property type="entry name" value="DALA_DALA_LIGASE_2"/>
    <property type="match status" value="1"/>
</dbReference>
<evidence type="ECO:0000250" key="1"/>
<evidence type="ECO:0000255" key="2">
    <source>
        <dbReference type="HAMAP-Rule" id="MF_00047"/>
    </source>
</evidence>
<comment type="function">
    <text evidence="2">Cell wall formation.</text>
</comment>
<comment type="catalytic activity">
    <reaction evidence="2">
        <text>2 D-alanine + ATP = D-alanyl-D-alanine + ADP + phosphate + H(+)</text>
        <dbReference type="Rhea" id="RHEA:11224"/>
        <dbReference type="ChEBI" id="CHEBI:15378"/>
        <dbReference type="ChEBI" id="CHEBI:30616"/>
        <dbReference type="ChEBI" id="CHEBI:43474"/>
        <dbReference type="ChEBI" id="CHEBI:57416"/>
        <dbReference type="ChEBI" id="CHEBI:57822"/>
        <dbReference type="ChEBI" id="CHEBI:456216"/>
        <dbReference type="EC" id="6.3.2.4"/>
    </reaction>
</comment>
<comment type="cofactor">
    <cofactor evidence="1">
        <name>Mg(2+)</name>
        <dbReference type="ChEBI" id="CHEBI:18420"/>
    </cofactor>
    <cofactor evidence="1">
        <name>Mn(2+)</name>
        <dbReference type="ChEBI" id="CHEBI:29035"/>
    </cofactor>
    <text evidence="1">Binds 2 magnesium or manganese ions per subunit.</text>
</comment>
<comment type="pathway">
    <text evidence="2">Cell wall biogenesis; peptidoglycan biosynthesis.</text>
</comment>
<comment type="subcellular location">
    <subcellularLocation>
        <location evidence="2">Cytoplasm</location>
    </subcellularLocation>
</comment>
<comment type="similarity">
    <text evidence="2">Belongs to the D-alanine--D-alanine ligase family.</text>
</comment>
<keyword id="KW-0067">ATP-binding</keyword>
<keyword id="KW-0133">Cell shape</keyword>
<keyword id="KW-0961">Cell wall biogenesis/degradation</keyword>
<keyword id="KW-0963">Cytoplasm</keyword>
<keyword id="KW-0436">Ligase</keyword>
<keyword id="KW-0460">Magnesium</keyword>
<keyword id="KW-0464">Manganese</keyword>
<keyword id="KW-0479">Metal-binding</keyword>
<keyword id="KW-0547">Nucleotide-binding</keyword>
<keyword id="KW-0573">Peptidoglycan synthesis</keyword>
<protein>
    <recommendedName>
        <fullName evidence="2">D-alanine--D-alanine ligase</fullName>
        <ecNumber evidence="2">6.3.2.4</ecNumber>
    </recommendedName>
    <alternativeName>
        <fullName evidence="2">D-Ala-D-Ala ligase</fullName>
    </alternativeName>
    <alternativeName>
        <fullName evidence="2">D-alanylalanine synthetase</fullName>
    </alternativeName>
</protein>
<feature type="chain" id="PRO_1000030473" description="D-alanine--D-alanine ligase">
    <location>
        <begin position="1"/>
        <end position="304"/>
    </location>
</feature>
<feature type="domain" description="ATP-grasp" evidence="2">
    <location>
        <begin position="103"/>
        <end position="299"/>
    </location>
</feature>
<feature type="binding site" evidence="2">
    <location>
        <begin position="129"/>
        <end position="184"/>
    </location>
    <ligand>
        <name>ATP</name>
        <dbReference type="ChEBI" id="CHEBI:30616"/>
    </ligand>
</feature>
<feature type="binding site" evidence="2">
    <location>
        <position position="253"/>
    </location>
    <ligand>
        <name>Mg(2+)</name>
        <dbReference type="ChEBI" id="CHEBI:18420"/>
        <label>1</label>
    </ligand>
</feature>
<feature type="binding site" evidence="2">
    <location>
        <position position="266"/>
    </location>
    <ligand>
        <name>Mg(2+)</name>
        <dbReference type="ChEBI" id="CHEBI:18420"/>
        <label>1</label>
    </ligand>
</feature>
<feature type="binding site" evidence="2">
    <location>
        <position position="266"/>
    </location>
    <ligand>
        <name>Mg(2+)</name>
        <dbReference type="ChEBI" id="CHEBI:18420"/>
        <label>2</label>
    </ligand>
</feature>
<feature type="binding site" evidence="2">
    <location>
        <position position="268"/>
    </location>
    <ligand>
        <name>Mg(2+)</name>
        <dbReference type="ChEBI" id="CHEBI:18420"/>
        <label>2</label>
    </ligand>
</feature>
<gene>
    <name evidence="2" type="primary">ddl</name>
    <name type="ordered locus">NMC1740</name>
</gene>
<organism>
    <name type="scientific">Neisseria meningitidis serogroup C / serotype 2a (strain ATCC 700532 / DSM 15464 / FAM18)</name>
    <dbReference type="NCBI Taxonomy" id="272831"/>
    <lineage>
        <taxon>Bacteria</taxon>
        <taxon>Pseudomonadati</taxon>
        <taxon>Pseudomonadota</taxon>
        <taxon>Betaproteobacteria</taxon>
        <taxon>Neisseriales</taxon>
        <taxon>Neisseriaceae</taxon>
        <taxon>Neisseria</taxon>
    </lineage>
</organism>
<sequence length="304" mass="32583">MQNFGKVAVLMGGFSSEREISLDSGTAILNALKSKGIDAYAFDPKETPLSELKAQGFQTAFNILHGTYGEDGAVQGALELLGIPYTGSGVAASAIGMDKYRCKLIWQALGLPVPEFAVLHDDTDFDAVEEKLGLPMFVKPAAEGSSVGVVKVKGKGRLKSVYEELKHLQGEIIAERFIGGGEYSCPVLNGKGLPGIHIIPATEFYDYEAKYNRNDTIYQCPSEDLTEAEESLMRELAVRGAQAIGAESCVRVDFLKDTDGKLYLLEINTLPGMTSHSLVPKSAAVTGVGFADLCIEILKTAHVG</sequence>
<reference key="1">
    <citation type="journal article" date="2007" name="PLoS Genet.">
        <title>Meningococcal genetic variation mechanisms viewed through comparative analysis of serogroup C strain FAM18.</title>
        <authorList>
            <person name="Bentley S.D."/>
            <person name="Vernikos G.S."/>
            <person name="Snyder L.A.S."/>
            <person name="Churcher C."/>
            <person name="Arrowsmith C."/>
            <person name="Chillingworth T."/>
            <person name="Cronin A."/>
            <person name="Davis P.H."/>
            <person name="Holroyd N.E."/>
            <person name="Jagels K."/>
            <person name="Maddison M."/>
            <person name="Moule S."/>
            <person name="Rabbinowitsch E."/>
            <person name="Sharp S."/>
            <person name="Unwin L."/>
            <person name="Whitehead S."/>
            <person name="Quail M.A."/>
            <person name="Achtman M."/>
            <person name="Barrell B.G."/>
            <person name="Saunders N.J."/>
            <person name="Parkhill J."/>
        </authorList>
    </citation>
    <scope>NUCLEOTIDE SEQUENCE [LARGE SCALE GENOMIC DNA]</scope>
    <source>
        <strain>ATCC 700532 / DSM 15464 / FAM18</strain>
    </source>
</reference>
<proteinExistence type="inferred from homology"/>